<evidence type="ECO:0000250" key="1">
    <source>
        <dbReference type="UniProtKB" id="O43283"/>
    </source>
</evidence>
<evidence type="ECO:0000255" key="2">
    <source>
        <dbReference type="PROSITE-ProRule" id="PRU00159"/>
    </source>
</evidence>
<evidence type="ECO:0000255" key="3">
    <source>
        <dbReference type="PROSITE-ProRule" id="PRU10027"/>
    </source>
</evidence>
<evidence type="ECO:0000256" key="4">
    <source>
        <dbReference type="SAM" id="MobiDB-lite"/>
    </source>
</evidence>
<evidence type="ECO:0000269" key="5">
    <source>
    </source>
</evidence>
<evidence type="ECO:0000269" key="6">
    <source>
    </source>
</evidence>
<evidence type="ECO:0000269" key="7">
    <source>
    </source>
</evidence>
<evidence type="ECO:0000269" key="8">
    <source>
    </source>
</evidence>
<evidence type="ECO:0000269" key="9">
    <source>
    </source>
</evidence>
<evidence type="ECO:0000269" key="10">
    <source>
    </source>
</evidence>
<evidence type="ECO:0000269" key="11">
    <source>
    </source>
</evidence>
<evidence type="ECO:0000269" key="12">
    <source>
    </source>
</evidence>
<evidence type="ECO:0000269" key="13">
    <source>
    </source>
</evidence>
<evidence type="ECO:0000269" key="14">
    <source>
    </source>
</evidence>
<evidence type="ECO:0000269" key="15">
    <source>
    </source>
</evidence>
<evidence type="ECO:0000303" key="16">
    <source>
    </source>
</evidence>
<evidence type="ECO:0000303" key="17">
    <source>
    </source>
</evidence>
<evidence type="ECO:0000305" key="18"/>
<evidence type="ECO:0000305" key="19">
    <source>
    </source>
</evidence>
<evidence type="ECO:0000312" key="20">
    <source>
        <dbReference type="EMBL" id="CAB06544.3"/>
    </source>
</evidence>
<evidence type="ECO:0000312" key="21">
    <source>
        <dbReference type="WormBase" id="F33E2.2a"/>
    </source>
</evidence>
<evidence type="ECO:0000312" key="22">
    <source>
        <dbReference type="WormBase" id="F33E2.2b"/>
    </source>
</evidence>
<evidence type="ECO:0000312" key="23">
    <source>
        <dbReference type="WormBase" id="F33E2.2c"/>
    </source>
</evidence>
<evidence type="ECO:0000312" key="24">
    <source>
        <dbReference type="WormBase" id="F33E2.2d"/>
    </source>
</evidence>
<gene>
    <name type="primary">dlk-1</name>
    <name type="ORF">F33E2.2</name>
</gene>
<dbReference type="EC" id="2.7.11.25" evidence="1"/>
<dbReference type="EMBL" id="BX284601">
    <property type="protein sequence ID" value="CAB06544.3"/>
    <property type="molecule type" value="Genomic_DNA"/>
</dbReference>
<dbReference type="EMBL" id="AL022593">
    <property type="protein sequence ID" value="CAB06544.3"/>
    <property type="status" value="JOINED"/>
    <property type="molecule type" value="Genomic_DNA"/>
</dbReference>
<dbReference type="EMBL" id="BX284601">
    <property type="protein sequence ID" value="CAE54890.1"/>
    <property type="molecule type" value="Genomic_DNA"/>
</dbReference>
<dbReference type="EMBL" id="BX284601">
    <property type="protein sequence ID" value="CAE54891.1"/>
    <property type="molecule type" value="Genomic_DNA"/>
</dbReference>
<dbReference type="EMBL" id="AL022593">
    <property type="protein sequence ID" value="CAE54891.1"/>
    <property type="status" value="JOINED"/>
    <property type="molecule type" value="Genomic_DNA"/>
</dbReference>
<dbReference type="EMBL" id="BX284601">
    <property type="protein sequence ID" value="CAQ76474.1"/>
    <property type="molecule type" value="Genomic_DNA"/>
</dbReference>
<dbReference type="EMBL" id="AL022593">
    <property type="protein sequence ID" value="CAQ76474.1"/>
    <property type="status" value="JOINED"/>
    <property type="molecule type" value="Genomic_DNA"/>
</dbReference>
<dbReference type="PIR" id="B87950">
    <property type="entry name" value="B87950"/>
</dbReference>
<dbReference type="PIR" id="T20082">
    <property type="entry name" value="T20082"/>
</dbReference>
<dbReference type="RefSeq" id="NP_001021443.1">
    <molecule id="O01700-1"/>
    <property type="nucleotide sequence ID" value="NM_001026272.5"/>
</dbReference>
<dbReference type="RefSeq" id="NP_001021444.1">
    <molecule id="O01700-2"/>
    <property type="nucleotide sequence ID" value="NM_001026273.7"/>
</dbReference>
<dbReference type="RefSeq" id="NP_001021445.1">
    <molecule id="O01700-3"/>
    <property type="nucleotide sequence ID" value="NM_001026274.5"/>
</dbReference>
<dbReference type="RefSeq" id="NP_001129769.1">
    <molecule id="O01700-4"/>
    <property type="nucleotide sequence ID" value="NM_001136297.4"/>
</dbReference>
<dbReference type="SMR" id="O01700"/>
<dbReference type="BioGRID" id="38525">
    <property type="interactions" value="5"/>
</dbReference>
<dbReference type="DIP" id="DIP-26475N"/>
<dbReference type="FunCoup" id="O01700">
    <property type="interactions" value="1327"/>
</dbReference>
<dbReference type="IntAct" id="O01700">
    <property type="interactions" value="4"/>
</dbReference>
<dbReference type="STRING" id="6239.F33E2.2a.1"/>
<dbReference type="iPTMnet" id="O01700"/>
<dbReference type="PaxDb" id="6239-F33E2.2a"/>
<dbReference type="EnsemblMetazoa" id="F33E2.2a.1">
    <molecule id="O01700-1"/>
    <property type="protein sequence ID" value="F33E2.2a.1"/>
    <property type="gene ID" value="WBGene00001008"/>
</dbReference>
<dbReference type="EnsemblMetazoa" id="F33E2.2b.1">
    <molecule id="O01700-2"/>
    <property type="protein sequence ID" value="F33E2.2b.1"/>
    <property type="gene ID" value="WBGene00001008"/>
</dbReference>
<dbReference type="EnsemblMetazoa" id="F33E2.2c.1">
    <molecule id="O01700-3"/>
    <property type="protein sequence ID" value="F33E2.2c.1"/>
    <property type="gene ID" value="WBGene00001008"/>
</dbReference>
<dbReference type="EnsemblMetazoa" id="F33E2.2d.1">
    <molecule id="O01700-4"/>
    <property type="protein sequence ID" value="F33E2.2d.1"/>
    <property type="gene ID" value="WBGene00001008"/>
</dbReference>
<dbReference type="GeneID" id="173128"/>
<dbReference type="KEGG" id="cel:CELE_F33E2.2"/>
<dbReference type="UCSC" id="F33E2.2b">
    <property type="organism name" value="c. elegans"/>
</dbReference>
<dbReference type="AGR" id="WB:WBGene00001008"/>
<dbReference type="CTD" id="173128"/>
<dbReference type="WormBase" id="F33E2.2a">
    <molecule id="O01700-1"/>
    <property type="protein sequence ID" value="CE36153"/>
    <property type="gene ID" value="WBGene00001008"/>
    <property type="gene designation" value="dlk-1"/>
</dbReference>
<dbReference type="WormBase" id="F33E2.2b">
    <molecule id="O01700-2"/>
    <property type="protein sequence ID" value="CE36154"/>
    <property type="gene ID" value="WBGene00001008"/>
    <property type="gene designation" value="dlk-1"/>
</dbReference>
<dbReference type="WormBase" id="F33E2.2c">
    <molecule id="O01700-3"/>
    <property type="protein sequence ID" value="CE36155"/>
    <property type="gene ID" value="WBGene00001008"/>
    <property type="gene designation" value="dlk-1"/>
</dbReference>
<dbReference type="WormBase" id="F33E2.2d">
    <molecule id="O01700-4"/>
    <property type="protein sequence ID" value="CE23702"/>
    <property type="gene ID" value="WBGene00001008"/>
    <property type="gene designation" value="dlk-1"/>
</dbReference>
<dbReference type="eggNOG" id="KOG4721">
    <property type="taxonomic scope" value="Eukaryota"/>
</dbReference>
<dbReference type="GeneTree" id="ENSGT00940000159006"/>
<dbReference type="InParanoid" id="O01700"/>
<dbReference type="OMA" id="MKGIRQE"/>
<dbReference type="OrthoDB" id="339325at2759"/>
<dbReference type="PhylomeDB" id="O01700"/>
<dbReference type="SignaLink" id="O01700"/>
<dbReference type="PRO" id="PR:O01700"/>
<dbReference type="Proteomes" id="UP000001940">
    <property type="component" value="Chromosome I"/>
</dbReference>
<dbReference type="Bgee" id="WBGene00001008">
    <property type="expression patterns" value="Expressed in larva and 4 other cell types or tissues"/>
</dbReference>
<dbReference type="ExpressionAtlas" id="O01700">
    <property type="expression patterns" value="baseline and differential"/>
</dbReference>
<dbReference type="GO" id="GO:0030424">
    <property type="term" value="C:axon"/>
    <property type="evidence" value="ECO:0007669"/>
    <property type="project" value="UniProtKB-SubCell"/>
</dbReference>
<dbReference type="GO" id="GO:0005929">
    <property type="term" value="C:cilium"/>
    <property type="evidence" value="ECO:0007669"/>
    <property type="project" value="UniProtKB-SubCell"/>
</dbReference>
<dbReference type="GO" id="GO:0005737">
    <property type="term" value="C:cytoplasm"/>
    <property type="evidence" value="ECO:0000318"/>
    <property type="project" value="GO_Central"/>
</dbReference>
<dbReference type="GO" id="GO:0030425">
    <property type="term" value="C:dendrite"/>
    <property type="evidence" value="ECO:0007669"/>
    <property type="project" value="UniProtKB-SubCell"/>
</dbReference>
<dbReference type="GO" id="GO:0043025">
    <property type="term" value="C:neuronal cell body"/>
    <property type="evidence" value="ECO:0000314"/>
    <property type="project" value="WormBase"/>
</dbReference>
<dbReference type="GO" id="GO:0045202">
    <property type="term" value="C:synapse"/>
    <property type="evidence" value="ECO:0000314"/>
    <property type="project" value="WormBase"/>
</dbReference>
<dbReference type="GO" id="GO:0005524">
    <property type="term" value="F:ATP binding"/>
    <property type="evidence" value="ECO:0007669"/>
    <property type="project" value="UniProtKB-KW"/>
</dbReference>
<dbReference type="GO" id="GO:0004709">
    <property type="term" value="F:MAP kinase kinase kinase activity"/>
    <property type="evidence" value="ECO:0007669"/>
    <property type="project" value="UniProtKB-EC"/>
</dbReference>
<dbReference type="GO" id="GO:0046872">
    <property type="term" value="F:metal ion binding"/>
    <property type="evidence" value="ECO:0007669"/>
    <property type="project" value="UniProtKB-KW"/>
</dbReference>
<dbReference type="GO" id="GO:0004672">
    <property type="term" value="F:protein kinase activity"/>
    <property type="evidence" value="ECO:0000318"/>
    <property type="project" value="GO_Central"/>
</dbReference>
<dbReference type="GO" id="GO:0106310">
    <property type="term" value="F:protein serine kinase activity"/>
    <property type="evidence" value="ECO:0007669"/>
    <property type="project" value="RHEA"/>
</dbReference>
<dbReference type="GO" id="GO:0031625">
    <property type="term" value="F:ubiquitin protein ligase binding"/>
    <property type="evidence" value="ECO:0000353"/>
    <property type="project" value="WormBase"/>
</dbReference>
<dbReference type="GO" id="GO:0048677">
    <property type="term" value="P:axon extension involved in regeneration"/>
    <property type="evidence" value="ECO:0000315"/>
    <property type="project" value="WormBase"/>
</dbReference>
<dbReference type="GO" id="GO:0031103">
    <property type="term" value="P:axon regeneration"/>
    <property type="evidence" value="ECO:0000316"/>
    <property type="project" value="UniProtKB"/>
</dbReference>
<dbReference type="GO" id="GO:0048689">
    <property type="term" value="P:formation of growth cone in injured axon"/>
    <property type="evidence" value="ECO:0000315"/>
    <property type="project" value="WormBase"/>
</dbReference>
<dbReference type="GO" id="GO:0000165">
    <property type="term" value="P:MAPK cascade"/>
    <property type="evidence" value="ECO:0000315"/>
    <property type="project" value="UniProtKB"/>
</dbReference>
<dbReference type="GO" id="GO:0046785">
    <property type="term" value="P:microtubule polymerization"/>
    <property type="evidence" value="ECO:0000315"/>
    <property type="project" value="UniProtKB"/>
</dbReference>
<dbReference type="GO" id="GO:0038066">
    <property type="term" value="P:p38MAPK cascade"/>
    <property type="evidence" value="ECO:0000315"/>
    <property type="project" value="UniProtKB"/>
</dbReference>
<dbReference type="GO" id="GO:0045773">
    <property type="term" value="P:positive regulation of axon extension"/>
    <property type="evidence" value="ECO:0000316"/>
    <property type="project" value="WormBase"/>
</dbReference>
<dbReference type="GO" id="GO:0048691">
    <property type="term" value="P:positive regulation of axon extension involved in regeneration"/>
    <property type="evidence" value="ECO:0000315"/>
    <property type="project" value="UniProtKB"/>
</dbReference>
<dbReference type="GO" id="GO:1905868">
    <property type="term" value="P:regulation of 3'-UTR-mediated mRNA stabilization"/>
    <property type="evidence" value="ECO:0000316"/>
    <property type="project" value="UniProtKB"/>
</dbReference>
<dbReference type="GO" id="GO:0048841">
    <property type="term" value="P:regulation of axon extension involved in axon guidance"/>
    <property type="evidence" value="ECO:0000316"/>
    <property type="project" value="UniProtKB"/>
</dbReference>
<dbReference type="GO" id="GO:0050807">
    <property type="term" value="P:regulation of synapse organization"/>
    <property type="evidence" value="ECO:0000316"/>
    <property type="project" value="WormBase"/>
</dbReference>
<dbReference type="GO" id="GO:0007165">
    <property type="term" value="P:signal transduction"/>
    <property type="evidence" value="ECO:0000318"/>
    <property type="project" value="GO_Central"/>
</dbReference>
<dbReference type="FunFam" id="1.10.510.10:FF:000087">
    <property type="entry name" value="Mitogen-activated protein kinase kinase kinase 12"/>
    <property type="match status" value="1"/>
</dbReference>
<dbReference type="Gene3D" id="3.30.200.20">
    <property type="entry name" value="Phosphorylase Kinase, domain 1"/>
    <property type="match status" value="1"/>
</dbReference>
<dbReference type="Gene3D" id="1.10.510.10">
    <property type="entry name" value="Transferase(Phosphotransferase) domain 1"/>
    <property type="match status" value="1"/>
</dbReference>
<dbReference type="InterPro" id="IPR011009">
    <property type="entry name" value="Kinase-like_dom_sf"/>
</dbReference>
<dbReference type="InterPro" id="IPR017419">
    <property type="entry name" value="MAP3K12_MAP3K13"/>
</dbReference>
<dbReference type="InterPro" id="IPR000719">
    <property type="entry name" value="Prot_kinase_dom"/>
</dbReference>
<dbReference type="InterPro" id="IPR001245">
    <property type="entry name" value="Ser-Thr/Tyr_kinase_cat_dom"/>
</dbReference>
<dbReference type="InterPro" id="IPR008271">
    <property type="entry name" value="Ser/Thr_kinase_AS"/>
</dbReference>
<dbReference type="InterPro" id="IPR051681">
    <property type="entry name" value="Ser/Thr_Kinases-Pseudokinases"/>
</dbReference>
<dbReference type="PANTHER" id="PTHR44329:SF304">
    <property type="entry name" value="MITOGEN-ACTIVATED PROTEIN KINASE KINASE KINASE 13-LIKE ISOFORM X1"/>
    <property type="match status" value="1"/>
</dbReference>
<dbReference type="PANTHER" id="PTHR44329">
    <property type="entry name" value="SERINE/THREONINE-PROTEIN KINASE TNNI3K-RELATED"/>
    <property type="match status" value="1"/>
</dbReference>
<dbReference type="Pfam" id="PF00069">
    <property type="entry name" value="Pkinase"/>
    <property type="match status" value="1"/>
</dbReference>
<dbReference type="PIRSF" id="PIRSF038165">
    <property type="entry name" value="MAPKKK12_MAPKKK13"/>
    <property type="match status" value="1"/>
</dbReference>
<dbReference type="PRINTS" id="PR00109">
    <property type="entry name" value="TYRKINASE"/>
</dbReference>
<dbReference type="SMART" id="SM00220">
    <property type="entry name" value="S_TKc"/>
    <property type="match status" value="1"/>
</dbReference>
<dbReference type="SUPFAM" id="SSF56112">
    <property type="entry name" value="Protein kinase-like (PK-like)"/>
    <property type="match status" value="1"/>
</dbReference>
<dbReference type="PROSITE" id="PS50011">
    <property type="entry name" value="PROTEIN_KINASE_DOM"/>
    <property type="match status" value="1"/>
</dbReference>
<dbReference type="PROSITE" id="PS00108">
    <property type="entry name" value="PROTEIN_KINASE_ST"/>
    <property type="match status" value="1"/>
</dbReference>
<organism>
    <name type="scientific">Caenorhabditis elegans</name>
    <dbReference type="NCBI Taxonomy" id="6239"/>
    <lineage>
        <taxon>Eukaryota</taxon>
        <taxon>Metazoa</taxon>
        <taxon>Ecdysozoa</taxon>
        <taxon>Nematoda</taxon>
        <taxon>Chromadorea</taxon>
        <taxon>Rhabditida</taxon>
        <taxon>Rhabditina</taxon>
        <taxon>Rhabditomorpha</taxon>
        <taxon>Rhabditoidea</taxon>
        <taxon>Rhabditidae</taxon>
        <taxon>Peloderinae</taxon>
        <taxon>Caenorhabditis</taxon>
    </lineage>
</organism>
<protein>
    <recommendedName>
        <fullName evidence="1">Mitogen-activated protein kinase kinase kinase dlk-1</fullName>
        <ecNumber evidence="1">2.7.11.25</ecNumber>
    </recommendedName>
    <alternativeName>
        <fullName>DAP kinase-like kinase</fullName>
    </alternativeName>
    <alternativeName>
        <fullName>Death-associated protein kinase-like kinase</fullName>
    </alternativeName>
</protein>
<name>DLK1_CAEEL</name>
<keyword id="KW-0025">Alternative splicing</keyword>
<keyword id="KW-0067">ATP-binding</keyword>
<keyword id="KW-0966">Cell projection</keyword>
<keyword id="KW-0963">Cytoplasm</keyword>
<keyword id="KW-0418">Kinase</keyword>
<keyword id="KW-0460">Magnesium</keyword>
<keyword id="KW-0479">Metal-binding</keyword>
<keyword id="KW-0524">Neurogenesis</keyword>
<keyword id="KW-0547">Nucleotide-binding</keyword>
<keyword id="KW-0597">Phosphoprotein</keyword>
<keyword id="KW-1185">Reference proteome</keyword>
<keyword id="KW-0723">Serine/threonine-protein kinase</keyword>
<keyword id="KW-0770">Synapse</keyword>
<keyword id="KW-0808">Transferase</keyword>
<keyword id="KW-0832">Ubl conjugation</keyword>
<comment type="function">
    <text evidence="5 8 9 11 14 15">Component of a MAP kinase pathway that functions presynaptically to regulate synaptic architecture and presynaptic differentiation (PubMed:15707898). Phosphorylates and activates mkk-4 (PubMed:15707898). Has a role in axonal regrowth following injury and synaptogenesis (PubMed:19164707, PubMed:19737525). Plays a role in modulating polymerization of neuronal microtubules (PubMed:21368137). Also promotes tubulin post-translational modifications that protect microtubules (PubMed:23000142). Plays a role in cilium length regulation, possibly by reducing rab-5 mediated endocytosis, and may also have a role in intraflagellar transport in cilia (PubMed:26657059). Plays a role in the formation of muscle connections, also called muscle arm extensions, between the body wall and the motor axons in the dorsal and ventral cord (PubMed:27123983).</text>
</comment>
<comment type="function">
    <molecule>Isoform a</molecule>
    <text evidence="12">Has a role in synapse and axon development, and in axonal regrowth following injury.</text>
</comment>
<comment type="function">
    <molecule>Isoform c</molecule>
    <text evidence="12">By forming heterooligomers with isoform a, acts as an inhibitor of isoform a activation. Its inhibitory function is independent of its catalytic activity.</text>
</comment>
<comment type="catalytic activity">
    <reaction evidence="1">
        <text>L-seryl-[protein] + ATP = O-phospho-L-seryl-[protein] + ADP + H(+)</text>
        <dbReference type="Rhea" id="RHEA:17989"/>
        <dbReference type="Rhea" id="RHEA-COMP:9863"/>
        <dbReference type="Rhea" id="RHEA-COMP:11604"/>
        <dbReference type="ChEBI" id="CHEBI:15378"/>
        <dbReference type="ChEBI" id="CHEBI:29999"/>
        <dbReference type="ChEBI" id="CHEBI:30616"/>
        <dbReference type="ChEBI" id="CHEBI:83421"/>
        <dbReference type="ChEBI" id="CHEBI:456216"/>
        <dbReference type="EC" id="2.7.11.25"/>
    </reaction>
</comment>
<comment type="catalytic activity">
    <reaction evidence="1">
        <text>L-threonyl-[protein] + ATP = O-phospho-L-threonyl-[protein] + ADP + H(+)</text>
        <dbReference type="Rhea" id="RHEA:46608"/>
        <dbReference type="Rhea" id="RHEA-COMP:11060"/>
        <dbReference type="Rhea" id="RHEA-COMP:11605"/>
        <dbReference type="ChEBI" id="CHEBI:15378"/>
        <dbReference type="ChEBI" id="CHEBI:30013"/>
        <dbReference type="ChEBI" id="CHEBI:30616"/>
        <dbReference type="ChEBI" id="CHEBI:61977"/>
        <dbReference type="ChEBI" id="CHEBI:456216"/>
        <dbReference type="EC" id="2.7.11.25"/>
    </reaction>
</comment>
<comment type="cofactor">
    <cofactor evidence="1">
        <name>Mg(2+)</name>
        <dbReference type="ChEBI" id="CHEBI:18420"/>
    </cofactor>
</comment>
<comment type="activity regulation">
    <molecule>Isoform a</molecule>
    <text evidence="12">Inactive when associated with isoform c. Dissociation from isoform c, which is dependent on the phosphorylation of the C-terminal hexapeptide, results in self-association and activation. Transient increase in Ca(2+) levels caused by axonal injury or synaptic activity triggers the dissociation of isoform a from isoform c; the dissociation may be influenced by the phosphorylation status of the C-terminal hexapeptide.</text>
</comment>
<comment type="subunit">
    <text evidence="12">Homooligomer (via leucine zipper domain and hexapeptide motif) (PubMed:23141066). Isoform a (via leucine zipper domain) forms a heterooligomer with isoform c (via leucine zipper domain) (PubMed:23141066). Isoform c does not self-associate (PubMed:23141066).</text>
</comment>
<comment type="subcellular location">
    <subcellularLocation>
        <location evidence="5 7 11">Synapse</location>
    </subcellularLocation>
    <subcellularLocation>
        <location evidence="14">Cytoplasm</location>
    </subcellularLocation>
    <subcellularLocation>
        <location evidence="14">Cell projection</location>
        <location evidence="14">Axon</location>
    </subcellularLocation>
    <subcellularLocation>
        <location evidence="14">Cell projection</location>
        <location evidence="14">Dendrite</location>
    </subcellularLocation>
    <subcellularLocation>
        <location evidence="14">Cell projection</location>
        <location evidence="14">Cilium</location>
    </subcellularLocation>
    <text evidence="5">Observed in the periactive zone of the presynaptic terminal which surrounds the synaptic vesicle clusters and active zones.</text>
</comment>
<comment type="subcellular location">
    <molecule>Isoform a</molecule>
    <subcellularLocation>
        <location evidence="12">Synapse</location>
    </subcellularLocation>
    <subcellularLocation>
        <location evidence="12">Cell projection</location>
        <location evidence="12">Axon</location>
    </subcellularLocation>
    <text evidence="12">Co-localizes with isoform c in synapses and axons; however, isoform a localization is independent on its interaction with isoform c. During axonal injury, recruited to the injured site.</text>
</comment>
<comment type="subcellular location">
    <molecule>Isoform c</molecule>
    <subcellularLocation>
        <location evidence="12">Synapse</location>
    </subcellularLocation>
    <subcellularLocation>
        <location evidence="12">Cell projection</location>
        <location evidence="12">Axon</location>
    </subcellularLocation>
    <text evidence="12">Co-localizes with isoform c in synapses and axons; however, localization is dependent of its interaction with isoform a.</text>
</comment>
<comment type="alternative products">
    <event type="alternative splicing"/>
    <isoform>
        <id>O01700-1</id>
        <name evidence="21">a</name>
        <name evidence="16">DLK-1L</name>
        <sequence type="displayed"/>
    </isoform>
    <isoform>
        <id>O01700-2</id>
        <name evidence="22">b</name>
        <sequence type="described" ref="VSP_052967"/>
    </isoform>
    <isoform>
        <id>O01700-3</id>
        <name evidence="23">c</name>
        <name evidence="16">DLK-1S</name>
        <sequence type="described" ref="VSP_052965 VSP_052966"/>
    </isoform>
    <isoform>
        <id>O01700-4</id>
        <name evidence="24">d</name>
        <sequence type="described" ref="VSP_052964"/>
    </isoform>
</comment>
<comment type="tissue specificity">
    <text evidence="5 11">Expressed in nerve ring, nerve cord, neurons, and pharynx.</text>
</comment>
<comment type="domain">
    <molecule>Isoform a</molecule>
    <text evidence="12">The C-terminal hexapeptide motif is required for homooligomerization and for its activation.</text>
</comment>
<comment type="domain">
    <molecule>Isoform a</molecule>
    <text evidence="12">The C-terminal domain is important for localization to synapses and axons.</text>
</comment>
<comment type="PTM">
    <text evidence="5">Ubiquitinated by rpm-1. Negatively regulated by ubiquitination by fsn-1 bound rpm-1, followed by degradation.</text>
</comment>
<comment type="PTM">
    <molecule>Isoform a</molecule>
    <text evidence="12">Phosphorylation at Ser-874 and/or at Ser-878 abolishes interaction with isoform c and promotes binding to isoform a kinase domain (likely in trans) resulting in isoform a self-association and activation.</text>
</comment>
<comment type="disruption phenotype">
    <text evidence="6 8 11 15">Overcome the lack of synaptogenesis caused by the loss of rpm-1 ubiquitin ligase activity (PubMed:17698012). Defects in axonal microtubule development (PubMed:19164707, PubMed:23000142). Double knockout with dlk-1 also suppresses the eva-1 receptor expression defect in the madd-3 single knockout (PubMed:27123983). Triple knockout with madd-3 and unc-54 results in paralysis (as in the unc-54 single knockout), and suppresses the lethality phenotype in the double madd-3 and unc-54 mutant (PubMed:27123983).</text>
</comment>
<comment type="miscellaneous">
    <molecule>Isoform c</molecule>
    <text evidence="12 13">Produced by alternative polyadenylation. The alternative polyadenylation site is in intron 7. In neurons, the usage of this polyadenylation site is regulated by the antagonist action of sydn-1 and ssup-72.</text>
</comment>
<comment type="similarity">
    <text evidence="1">Belongs to the protein kinase superfamily. STE Ser/Thr protein kinase family. MAP kinase kinase kinase subfamily.</text>
</comment>
<sequence>MTSTTMVTTLDLVTPTSEEQPGPAPESSDFSTVVLSPDGSELVTQSAPNTPIQHREQANAEFGQKEGSPDPKNMVAATGNASKPSLNSFYADGLGQLRNGLFSCFQPVFGYFGTKTTVEIEKSEDELWEIPFDAISELEWLGSGSQGAVFRGQLENRTVAVKKVNQLKETEIKHLRHLRHQNIIEFLGVCSKSPCYCIVMEYCSKGQLCTVLKSRNTITRELFAQWVKEIADGMHYLHQNKVIHRDLKSPNILISAEDSIKICDFGTSHMQKKMDSTMMSFCGTVSWMAPEMIKKQPCNEKVDVYSFGVVLWEMLTRETPYANIAQMAIIFGVGTNILSLPMPEEAPKGLVLLIKQCLSQKGRNRPSFSHIRQHWEIFKPELFEMTEEEWQLAWDSYREFAKCIQYPSTVTRDHGGPKSAFAMEEEIQRKRHEQLNHIKDIRNMYEMKLKRTNKMYDKLQGCFTELKLKESELAEWEKDLTEREQWHNQNSPKAVAAPRAQLRGYPNEGYDDMSSDEDVQPCRGSPYRCSNTSSSSGVQSSPFSRQSSSRSSAGQQTRRSEGANPPKILRNDAIRHSGSYWETLGGARGSPARDSGFSQDSGMWSAGAGSCTAINGGGQQVCYSQTLYRNGDGRWSDGRIASRRRVSTSVNKSTAVPGQPVFFTRDSPSRVPHGVISCSSPRSSSKLNRSSYPSRNAPHQLEDGCCCAHARAPRAKSIAVPMTSSSRARSPTPYDNDFENAESFVDPESPKNLKNLEKIVNLPESTSYDEALCNSDVTMNPIYTSPITTYSNPCHVELVDEENANDVDLTSSMDSRRSRSDDADVESSEEDEGNGNNILNTSMESEDLRYRIDTSQSTMMSSLERSLEIGATRSDGLSDNEMRVQAVKMSIKTHRRTGSNPQALIHQCIDEYTTSATDDSDDAGAVRI</sequence>
<feature type="chain" id="PRO_0000353198" description="Mitogen-activated protein kinase kinase kinase dlk-1">
    <location>
        <begin position="1"/>
        <end position="928"/>
    </location>
</feature>
<feature type="domain" description="Protein kinase" evidence="2">
    <location>
        <begin position="135"/>
        <end position="377"/>
    </location>
</feature>
<feature type="region of interest" description="Disordered" evidence="4">
    <location>
        <begin position="1"/>
        <end position="72"/>
    </location>
</feature>
<feature type="region of interest" description="Leucine-zipper" evidence="12">
    <location>
        <begin position="459"/>
        <end position="480"/>
    </location>
</feature>
<feature type="region of interest" description="Disordered" evidence="4">
    <location>
        <begin position="483"/>
        <end position="575"/>
    </location>
</feature>
<feature type="region of interest" description="Important for interaction between isoform a and isoform c" evidence="12">
    <location>
        <begin position="605"/>
        <end position="814"/>
    </location>
</feature>
<feature type="region of interest" description="Disordered" evidence="4">
    <location>
        <begin position="644"/>
        <end position="696"/>
    </location>
</feature>
<feature type="region of interest" description="Disordered" evidence="4">
    <location>
        <begin position="802"/>
        <end position="845"/>
    </location>
</feature>
<feature type="short sequence motif" description="SDGLSD hexapeptide" evidence="12">
    <location>
        <begin position="874"/>
        <end position="879"/>
    </location>
</feature>
<feature type="compositionally biased region" description="Polar residues" evidence="4">
    <location>
        <begin position="42"/>
        <end position="52"/>
    </location>
</feature>
<feature type="compositionally biased region" description="Basic and acidic residues" evidence="4">
    <location>
        <begin position="53"/>
        <end position="69"/>
    </location>
</feature>
<feature type="compositionally biased region" description="Acidic residues" evidence="4">
    <location>
        <begin position="509"/>
        <end position="519"/>
    </location>
</feature>
<feature type="compositionally biased region" description="Low complexity" evidence="4">
    <location>
        <begin position="530"/>
        <end position="557"/>
    </location>
</feature>
<feature type="compositionally biased region" description="Polar residues" evidence="4">
    <location>
        <begin position="647"/>
        <end position="656"/>
    </location>
</feature>
<feature type="compositionally biased region" description="Low complexity" evidence="4">
    <location>
        <begin position="677"/>
        <end position="695"/>
    </location>
</feature>
<feature type="compositionally biased region" description="Acidic residues" evidence="4">
    <location>
        <begin position="823"/>
        <end position="833"/>
    </location>
</feature>
<feature type="active site" description="Proton acceptor" evidence="1 2 3">
    <location>
        <position position="246"/>
    </location>
</feature>
<feature type="binding site" evidence="1 2">
    <location>
        <begin position="141"/>
        <end position="149"/>
    </location>
    <ligand>
        <name>ATP</name>
        <dbReference type="ChEBI" id="CHEBI:30616"/>
    </ligand>
</feature>
<feature type="binding site" evidence="1 2">
    <location>
        <position position="162"/>
    </location>
    <ligand>
        <name>ATP</name>
        <dbReference type="ChEBI" id="CHEBI:30616"/>
    </ligand>
</feature>
<feature type="modified residue" description="Phosphoserine" evidence="19">
    <location>
        <position position="874"/>
    </location>
</feature>
<feature type="modified residue" description="Phosphoserine" evidence="19">
    <location>
        <position position="878"/>
    </location>
</feature>
<feature type="splice variant" id="VSP_052964" description="In isoform d." evidence="17">
    <location>
        <begin position="1"/>
        <end position="73"/>
    </location>
</feature>
<feature type="splice variant" id="VSP_052965" description="In isoform c." evidence="17">
    <original>KILRNDAIRHS</original>
    <variation>SEYIFPEKLNI</variation>
    <location>
        <begin position="567"/>
        <end position="577"/>
    </location>
</feature>
<feature type="splice variant" id="VSP_052966" description="In isoform c." evidence="17">
    <location>
        <begin position="578"/>
        <end position="928"/>
    </location>
</feature>
<feature type="splice variant" id="VSP_052967" description="In isoform b." evidence="17">
    <original>GVISCSSP</original>
    <variation>A</variation>
    <location>
        <begin position="674"/>
        <end position="681"/>
    </location>
</feature>
<feature type="mutagenesis site" description="In u816; Suppresses microtubule disruption in touch receptor neurons caused by colchicine." evidence="10">
    <original>G</original>
    <variation>R</variation>
    <location>
        <position position="144"/>
    </location>
</feature>
<feature type="mutagenesis site" description="In u818; Suppresses microtubule disruption in touch receptor neurons caused by colchicine." evidence="10">
    <location>
        <begin position="166"/>
        <end position="928"/>
    </location>
</feature>
<feature type="mutagenesis site" description="In u817; Suppresses microtubule disruption in touch receptor neurons caused by colchicine." evidence="10">
    <location>
        <begin position="181"/>
        <end position="928"/>
    </location>
</feature>
<feature type="mutagenesis site" description="In u820; Suppresses microtubule disruption in touch receptor neurons caused by colchicine." evidence="10">
    <original>D</original>
    <variation>N</variation>
    <location>
        <position position="246"/>
    </location>
</feature>
<feature type="mutagenesis site" description="In u815; Suppresses microtubule disruption in touch receptor neurons caused by colchicine." evidence="10">
    <original>G</original>
    <variation>E</variation>
    <location>
        <position position="308"/>
    </location>
</feature>
<feature type="mutagenesis site" description="In ju588; restores motor neuron normal presynapse morphology and number in a rpm-1 mutant background." evidence="12">
    <location>
        <begin position="312"/>
        <end position="928"/>
    </location>
</feature>
<feature type="mutagenesis site" description="In ju586; restores motor neuron normal presynapse morphology and number in a rpm-1 mutant background." evidence="12">
    <original>R</original>
    <variation>H</variation>
    <location>
        <position position="363"/>
    </location>
</feature>
<feature type="mutagenesis site" description="Prevents self-association or interaction with isoform c." evidence="12">
    <location>
        <begin position="449"/>
        <end position="480"/>
    </location>
</feature>
<feature type="mutagenesis site" description="In ju591; restores normal motor neuron presynapse morphology and number in a rpm-1 mutant background." evidence="12">
    <original>L</original>
    <variation>F</variation>
    <location>
        <position position="459"/>
    </location>
</feature>
<feature type="mutagenesis site" description="In ju598; restores normal motor neuron presynaspe morphology and number in a rpm-1 mutant background." evidence="12">
    <location>
        <begin position="523"/>
        <end position="928"/>
    </location>
</feature>
<feature type="mutagenesis site" description="Prevents interaction with isoform c." evidence="12">
    <location>
        <begin position="605"/>
        <end position="814"/>
    </location>
</feature>
<feature type="mutagenesis site" description="In ju476; does not affect c mRNA levels. Restores normal motor neuron presynapse morphology and number in a rpm-1 mutant background. Suppresses microtubule disruption in touch receptor neurons caused by colchicine." evidence="10 12">
    <location>
        <begin position="631"/>
        <end position="928"/>
    </location>
</feature>
<feature type="mutagenesis site" description="In ju636; restores normal motor neuron presynapse morphology and number in a rpm-1 mutant background." evidence="12">
    <location>
        <begin position="816"/>
        <end position="928"/>
    </location>
</feature>
<feature type="mutagenesis site" description="In ju620; restores normal motor neuron presynapse morphology and number in a rpm-1 mutant background." evidence="12">
    <original>G</original>
    <variation>E</variation>
    <location>
        <position position="870"/>
    </location>
</feature>
<feature type="mutagenesis site" description="Abolishes self-association and enhances interaction with isoform c." evidence="12">
    <location>
        <begin position="874"/>
        <end position="879"/>
    </location>
</feature>
<feature type="mutagenesis site" description="Prevents phosphorylation. Enhances binding to isoform c; when associated with A-878." evidence="12">
    <original>S</original>
    <variation>A</variation>
    <location>
        <position position="874"/>
    </location>
</feature>
<feature type="mutagenesis site" description="Phosphomimetic mutant. Enhances self-association and increases binding of the hexapeptide motif to the kinase domain; when associated with E-878." evidence="12">
    <original>S</original>
    <variation>E</variation>
    <location>
        <position position="874"/>
    </location>
</feature>
<feature type="mutagenesis site" description="Prevents phosphorylation. Enhances binding to isoform c; when associated with A-874." evidence="12">
    <original>S</original>
    <variation>A</variation>
    <location>
        <position position="878"/>
    </location>
</feature>
<feature type="mutagenesis site" description="Phosphomimetic mutant. Enhances self-association and increases binding of the hexapeptide motif to the kinase domain; when associated with E-874." evidence="12">
    <original>S</original>
    <variation>E</variation>
    <location>
        <position position="878"/>
    </location>
</feature>
<proteinExistence type="evidence at protein level"/>
<accession>O01700</accession>
<accession>B3KYB4</accession>
<accession>Q7JKE7</accession>
<accession>Q7JKE9</accession>
<reference evidence="20" key="1">
    <citation type="journal article" date="1998" name="Science">
        <title>Genome sequence of the nematode C. elegans: a platform for investigating biology.</title>
        <authorList>
            <consortium name="The C. elegans sequencing consortium"/>
        </authorList>
    </citation>
    <scope>NUCLEOTIDE SEQUENCE [LARGE SCALE GENOMIC DNA]</scope>
    <scope>ALTERNATIVE SPLICING</scope>
    <source>
        <strain evidence="20">Bristol N2</strain>
    </source>
</reference>
<reference evidence="18" key="2">
    <citation type="journal article" date="2005" name="Cell">
        <title>Regulation of a DLK-1 and p38 MAP kinase pathway by the ubiquitin ligase RPM-1 is required for presynaptic development.</title>
        <authorList>
            <person name="Nakata K."/>
            <person name="Abrams B."/>
            <person name="Grill B."/>
            <person name="Goncharov A."/>
            <person name="Huang X."/>
            <person name="Chisholm A.D."/>
            <person name="Jin Y."/>
        </authorList>
    </citation>
    <scope>FUNCTION</scope>
    <scope>ACTIVITY REGULATION</scope>
    <scope>SUBCELLULAR LOCATION</scope>
    <scope>TISSUE SPECIFICITY</scope>
    <scope>UBIQUITINATION</scope>
</reference>
<reference evidence="18" key="3">
    <citation type="journal article" date="2007" name="Neuron">
        <title>C. elegans RPM-1 regulates axon termination and synaptogenesis through the Rab GEF GLO-4 and the Rab GTPase GLO-1.</title>
        <authorList>
            <person name="Grill B."/>
            <person name="Bienvenut W.V."/>
            <person name="Brown H.M."/>
            <person name="Ackley B.D."/>
            <person name="Quadroni M."/>
            <person name="Jin Y."/>
        </authorList>
    </citation>
    <scope>ACTIVITY REGULATION</scope>
    <scope>DISRUPTION PHENOTYPE</scope>
</reference>
<reference evidence="18" key="4">
    <citation type="journal article" date="2008" name="Dev. Dyn.">
        <title>Cellular and molecular determinants targeting the Caenorhabditis elegans PHR protein RPM-1 to perisynaptic regions.</title>
        <authorList>
            <person name="Abrams B."/>
            <person name="Grill B."/>
            <person name="Huang X."/>
            <person name="Jin Y."/>
        </authorList>
    </citation>
    <scope>SUBCELLULAR LOCATION</scope>
</reference>
<reference key="5">
    <citation type="journal article" date="2009" name="Cell">
        <title>The DLK-1 kinase promotes mRNA stability and local translation in C. elegans synapses and axon regeneration.</title>
        <authorList>
            <person name="Yan D."/>
            <person name="Wu Z."/>
            <person name="Chisholm A.D."/>
            <person name="Jin Y."/>
        </authorList>
    </citation>
    <scope>FUNCTION</scope>
</reference>
<reference key="6">
    <citation type="journal article" date="2009" name="Science">
        <title>Axon regeneration requires a conserved MAP kinase pathway.</title>
        <authorList>
            <person name="Hammarlund M."/>
            <person name="Nix P."/>
            <person name="Hauth L."/>
            <person name="Jorgensen E.M."/>
            <person name="Bastiani M."/>
        </authorList>
    </citation>
    <scope>FUNCTION</scope>
    <scope>DISRUPTION PHENOTYPE</scope>
</reference>
<reference evidence="18" key="7">
    <citation type="journal article" date="2011" name="Proc. Natl. Acad. Sci. U.S.A.">
        <title>Microtubule depolymerization in Caenorhabditis elegans touch receptor neurons reduces gene expression through a p38 MAPK pathway.</title>
        <authorList>
            <person name="Bounoutas A."/>
            <person name="Kratz J."/>
            <person name="Emtage L."/>
            <person name="Ma C."/>
            <person name="Nguyen K.C."/>
            <person name="Chalfie M."/>
        </authorList>
    </citation>
    <scope>FUNCTION</scope>
    <scope>MUTAGENESIS OF GLY-144; 166-GLN--ILE-928; 181-GLN--ILE-928; ASP-246 AND GLY-308</scope>
</reference>
<reference key="8">
    <citation type="journal article" date="2012" name="Dev. Cell">
        <title>Kinesin-13 and tubulin posttranslational modifications regulate microtubule growth in axon regeneration.</title>
        <authorList>
            <person name="Ghosh-Roy A."/>
            <person name="Goncharov A."/>
            <person name="Jin Y."/>
            <person name="Chisholm A.D."/>
        </authorList>
    </citation>
    <scope>FUNCTION</scope>
    <scope>SUBCELLULAR LOCATION</scope>
    <scope>TISSUE SPECIFICITY</scope>
    <scope>DISRUPTION PHENOTYPE</scope>
</reference>
<reference key="9">
    <citation type="journal article" date="2012" name="Neuron">
        <title>Regulation of DLK-1 kinase activity by calcium-mediated dissociation from an inhibitory isoform.</title>
        <authorList>
            <person name="Yan D."/>
            <person name="Jin Y."/>
        </authorList>
    </citation>
    <scope>FUNCTION (ISOFORMS A AND C)</scope>
    <scope>ACTIVITY REGULATION</scope>
    <scope>SUBUNIT</scope>
    <scope>SUBCELLULAR LOCATION (ISOFORMS A AND C)</scope>
    <scope>ALTERNATIVE POLYADENYLATION</scope>
    <scope>DOMAIN</scope>
    <scope>MOTIF</scope>
    <scope>PHOSPHORYLATION AT SER-874 AND SER-878</scope>
    <scope>MUTAGENESIS OF 312-TRP--ILE-928; ARG-363; 449-LEU--LEU-480; LEU-459; 605-SER--ASP-814; 523-ARG--ILE-928; 631-GLY--ILE-928; 816-ARG--ILE-928; GLY-870; SER-874; SER-878 AND 874-SER--ASP-879</scope>
</reference>
<reference key="10">
    <citation type="journal article" date="2015" name="Genes Dev.">
        <title>Context-dependent modulation of Pol II CTD phosphatase SSUP-72 regulates alternative polyadenylation in neuronal development.</title>
        <authorList>
            <person name="Chen F."/>
            <person name="Zhou Y."/>
            <person name="Qi Y.B."/>
            <person name="Khivansara V."/>
            <person name="Li H."/>
            <person name="Chun S.Y."/>
            <person name="Kim J.K."/>
            <person name="Fu X.D."/>
            <person name="Jin Y."/>
        </authorList>
    </citation>
    <scope>ALTERNATIVE POLYADENYLATION</scope>
</reference>
<reference key="11">
    <citation type="journal article" date="2015" name="PLoS Genet.">
        <title>DLK-1/p38 MAP Kinase signaling controls cilium length by regulating RAB-5 mediated endocytosis in Caenorhabditis elegans.</title>
        <authorList>
            <person name="van der Vaart A."/>
            <person name="Rademakers S."/>
            <person name="Jansen G."/>
        </authorList>
    </citation>
    <scope>FUNCTION</scope>
    <scope>SUBCELLULAR LOCATION</scope>
</reference>
<reference key="12">
    <citation type="journal article" date="2016" name="PLoS Genet.">
        <title>The MADD-3 LAMMER kinase interacts with a p38 MAP kinase pathway to regulate the display of the EVA-1 guidance receptor in Caenorhabditis elegans.</title>
        <authorList>
            <person name="D'Souza S.A."/>
            <person name="Rajendran L."/>
            <person name="Bagg R."/>
            <person name="Barbier L."/>
            <person name="van Pel D.M."/>
            <person name="Moshiri H."/>
            <person name="Roy P.J."/>
        </authorList>
    </citation>
    <scope>FUNCTION</scope>
    <scope>DISRUPTION PHENOTYPE</scope>
</reference>